<keyword id="KW-0030">Aminoacyl-tRNA synthetase</keyword>
<keyword id="KW-0067">ATP-binding</keyword>
<keyword id="KW-0963">Cytoplasm</keyword>
<keyword id="KW-0436">Ligase</keyword>
<keyword id="KW-0479">Metal-binding</keyword>
<keyword id="KW-0547">Nucleotide-binding</keyword>
<keyword id="KW-0648">Protein biosynthesis</keyword>
<keyword id="KW-1185">Reference proteome</keyword>
<keyword id="KW-0694">RNA-binding</keyword>
<keyword id="KW-0820">tRNA-binding</keyword>
<keyword id="KW-0862">Zinc</keyword>
<proteinExistence type="inferred from homology"/>
<sequence>MHSREIRQSFLDFFAAKSHTIVRSAPVIPADDPTLLFTNAGMNQFKDVFLAKGTRPYTRAADTQKCIRASGKHNDLEDVGRDTYHHTFFEMLGNWSFGDYYKEEAISWAWELLTEVWKLPADRLYATVYHDDDESARIWAEKTSIEPSHILRFGDKDNFWEMGETGPCGPCSEIHIDLTPDGSGKELVNAGDHRAIELWNLVFIQYDRQPDGRLEPLPQRHVDTGMGFERVCAVMQSKASNYDTDVFLPLFQRLSELTGVTYGASMDGRQDIAMRVIADHARTLTFALSDGAMPSNEGRGYVLRRILRRALRYSRDLGCSGPILHQLVGTLADSMGDVFGELRDRRDAVERIIRAEEESFITTLDRGMEIFGELAAATARAGGRMLKGEDAFKLYDTYGFPFDLTRLLATEAGLDVDGEGFEHCMQEQKSRARSDRREKQQTGDGAGSWQWFSDSHATTFLGYDRLAMPSTIIGAAHASGHLLLVLAETPFYAESGGQTGDRGWLESAAYRMQVTDTRKDGDSFVHVVSRAFDKVRDTEIDPMDIVIEEATPVDASVERILRQETERNHTATHLLHAALRRILGSHVQQKGSFVTSERLRFDFSHFSKMTPEEIQAVEAEVNEHIRCAAHVSKHADLPYDEAIAKGALAFFGDKYAERVRMVEVPGISAELCGGTHVDNIGQIGIFKIISESSAAAGIRRIEALTGRAAEMLLWKEYHELQDVRQQLKLKADEAVAEKLAELQEEKKELEKELAGLKSASVIDALVRDATSAEEIGGCRIVTKVLEGVDADTLRSAAMALREKLPVSAGLLCSIADGKVSLAAFSSDVAVKEKGIDAGKLIRLAAAAVKGGGGGRAELATAGGKNPDGVAEACRIFAEDVRRIAGAV</sequence>
<reference key="1">
    <citation type="submission" date="2005-08" db="EMBL/GenBank/DDBJ databases">
        <title>Complete sequence of Pelodictyon luteolum DSM 273.</title>
        <authorList>
            <consortium name="US DOE Joint Genome Institute"/>
            <person name="Copeland A."/>
            <person name="Lucas S."/>
            <person name="Lapidus A."/>
            <person name="Barry K."/>
            <person name="Detter J.C."/>
            <person name="Glavina T."/>
            <person name="Hammon N."/>
            <person name="Israni S."/>
            <person name="Pitluck S."/>
            <person name="Bryant D."/>
            <person name="Schmutz J."/>
            <person name="Larimer F."/>
            <person name="Land M."/>
            <person name="Kyrpides N."/>
            <person name="Ivanova N."/>
            <person name="Richardson P."/>
        </authorList>
    </citation>
    <scope>NUCLEOTIDE SEQUENCE [LARGE SCALE GENOMIC DNA]</scope>
    <source>
        <strain>DSM 273 / BCRC 81028 / 2530</strain>
    </source>
</reference>
<accession>Q3B1I7</accession>
<feature type="chain" id="PRO_0000347717" description="Alanine--tRNA ligase">
    <location>
        <begin position="1"/>
        <end position="887"/>
    </location>
</feature>
<feature type="region of interest" description="Disordered" evidence="2">
    <location>
        <begin position="425"/>
        <end position="448"/>
    </location>
</feature>
<feature type="compositionally biased region" description="Basic and acidic residues" evidence="2">
    <location>
        <begin position="425"/>
        <end position="441"/>
    </location>
</feature>
<feature type="binding site" evidence="1">
    <location>
        <position position="569"/>
    </location>
    <ligand>
        <name>Zn(2+)</name>
        <dbReference type="ChEBI" id="CHEBI:29105"/>
    </ligand>
</feature>
<feature type="binding site" evidence="1">
    <location>
        <position position="573"/>
    </location>
    <ligand>
        <name>Zn(2+)</name>
        <dbReference type="ChEBI" id="CHEBI:29105"/>
    </ligand>
</feature>
<feature type="binding site" evidence="1">
    <location>
        <position position="672"/>
    </location>
    <ligand>
        <name>Zn(2+)</name>
        <dbReference type="ChEBI" id="CHEBI:29105"/>
    </ligand>
</feature>
<feature type="binding site" evidence="1">
    <location>
        <position position="676"/>
    </location>
    <ligand>
        <name>Zn(2+)</name>
        <dbReference type="ChEBI" id="CHEBI:29105"/>
    </ligand>
</feature>
<protein>
    <recommendedName>
        <fullName evidence="1">Alanine--tRNA ligase</fullName>
        <ecNumber evidence="1">6.1.1.7</ecNumber>
    </recommendedName>
    <alternativeName>
        <fullName evidence="1">Alanyl-tRNA synthetase</fullName>
        <shortName evidence="1">AlaRS</shortName>
    </alternativeName>
</protein>
<name>SYA_CHLL3</name>
<comment type="function">
    <text evidence="1">Catalyzes the attachment of alanine to tRNA(Ala) in a two-step reaction: alanine is first activated by ATP to form Ala-AMP and then transferred to the acceptor end of tRNA(Ala). Also edits incorrectly charged Ser-tRNA(Ala) and Gly-tRNA(Ala) via its editing domain.</text>
</comment>
<comment type="catalytic activity">
    <reaction evidence="1">
        <text>tRNA(Ala) + L-alanine + ATP = L-alanyl-tRNA(Ala) + AMP + diphosphate</text>
        <dbReference type="Rhea" id="RHEA:12540"/>
        <dbReference type="Rhea" id="RHEA-COMP:9657"/>
        <dbReference type="Rhea" id="RHEA-COMP:9923"/>
        <dbReference type="ChEBI" id="CHEBI:30616"/>
        <dbReference type="ChEBI" id="CHEBI:33019"/>
        <dbReference type="ChEBI" id="CHEBI:57972"/>
        <dbReference type="ChEBI" id="CHEBI:78442"/>
        <dbReference type="ChEBI" id="CHEBI:78497"/>
        <dbReference type="ChEBI" id="CHEBI:456215"/>
        <dbReference type="EC" id="6.1.1.7"/>
    </reaction>
</comment>
<comment type="cofactor">
    <cofactor evidence="1">
        <name>Zn(2+)</name>
        <dbReference type="ChEBI" id="CHEBI:29105"/>
    </cofactor>
    <text evidence="1">Binds 1 zinc ion per subunit.</text>
</comment>
<comment type="subcellular location">
    <subcellularLocation>
        <location evidence="1">Cytoplasm</location>
    </subcellularLocation>
</comment>
<comment type="domain">
    <text evidence="1">Consists of three domains; the N-terminal catalytic domain, the editing domain and the C-terminal C-Ala domain. The editing domain removes incorrectly charged amino acids, while the C-Ala domain, along with tRNA(Ala), serves as a bridge to cooperatively bring together the editing and aminoacylation centers thus stimulating deacylation of misacylated tRNAs.</text>
</comment>
<comment type="similarity">
    <text evidence="1">Belongs to the class-II aminoacyl-tRNA synthetase family.</text>
</comment>
<dbReference type="EC" id="6.1.1.7" evidence="1"/>
<dbReference type="EMBL" id="CP000096">
    <property type="protein sequence ID" value="ABB24794.1"/>
    <property type="molecule type" value="Genomic_DNA"/>
</dbReference>
<dbReference type="RefSeq" id="WP_011358664.1">
    <property type="nucleotide sequence ID" value="NC_007512.1"/>
</dbReference>
<dbReference type="SMR" id="Q3B1I7"/>
<dbReference type="STRING" id="319225.Plut_1952"/>
<dbReference type="KEGG" id="plt:Plut_1952"/>
<dbReference type="eggNOG" id="COG0013">
    <property type="taxonomic scope" value="Bacteria"/>
</dbReference>
<dbReference type="HOGENOM" id="CLU_004485_1_1_10"/>
<dbReference type="OrthoDB" id="9803884at2"/>
<dbReference type="Proteomes" id="UP000002709">
    <property type="component" value="Chromosome"/>
</dbReference>
<dbReference type="GO" id="GO:0005737">
    <property type="term" value="C:cytoplasm"/>
    <property type="evidence" value="ECO:0007669"/>
    <property type="project" value="UniProtKB-SubCell"/>
</dbReference>
<dbReference type="GO" id="GO:0004813">
    <property type="term" value="F:alanine-tRNA ligase activity"/>
    <property type="evidence" value="ECO:0007669"/>
    <property type="project" value="UniProtKB-UniRule"/>
</dbReference>
<dbReference type="GO" id="GO:0002161">
    <property type="term" value="F:aminoacyl-tRNA deacylase activity"/>
    <property type="evidence" value="ECO:0007669"/>
    <property type="project" value="TreeGrafter"/>
</dbReference>
<dbReference type="GO" id="GO:0005524">
    <property type="term" value="F:ATP binding"/>
    <property type="evidence" value="ECO:0007669"/>
    <property type="project" value="UniProtKB-UniRule"/>
</dbReference>
<dbReference type="GO" id="GO:0000049">
    <property type="term" value="F:tRNA binding"/>
    <property type="evidence" value="ECO:0007669"/>
    <property type="project" value="UniProtKB-KW"/>
</dbReference>
<dbReference type="GO" id="GO:0008270">
    <property type="term" value="F:zinc ion binding"/>
    <property type="evidence" value="ECO:0007669"/>
    <property type="project" value="UniProtKB-UniRule"/>
</dbReference>
<dbReference type="GO" id="GO:0006419">
    <property type="term" value="P:alanyl-tRNA aminoacylation"/>
    <property type="evidence" value="ECO:0007669"/>
    <property type="project" value="UniProtKB-UniRule"/>
</dbReference>
<dbReference type="CDD" id="cd00673">
    <property type="entry name" value="AlaRS_core"/>
    <property type="match status" value="1"/>
</dbReference>
<dbReference type="FunFam" id="3.10.310.40:FF:000001">
    <property type="entry name" value="Alanine--tRNA ligase"/>
    <property type="match status" value="1"/>
</dbReference>
<dbReference type="FunFam" id="3.30.930.10:FF:000004">
    <property type="entry name" value="Alanine--tRNA ligase"/>
    <property type="match status" value="1"/>
</dbReference>
<dbReference type="FunFam" id="3.30.980.10:FF:000004">
    <property type="entry name" value="Alanine--tRNA ligase, cytoplasmic"/>
    <property type="match status" value="1"/>
</dbReference>
<dbReference type="Gene3D" id="2.40.30.130">
    <property type="match status" value="1"/>
</dbReference>
<dbReference type="Gene3D" id="3.10.310.40">
    <property type="match status" value="1"/>
</dbReference>
<dbReference type="Gene3D" id="3.30.54.20">
    <property type="match status" value="1"/>
</dbReference>
<dbReference type="Gene3D" id="3.30.930.10">
    <property type="entry name" value="Bira Bifunctional Protein, Domain 2"/>
    <property type="match status" value="1"/>
</dbReference>
<dbReference type="Gene3D" id="3.30.980.10">
    <property type="entry name" value="Threonyl-trna Synthetase, Chain A, domain 2"/>
    <property type="match status" value="1"/>
</dbReference>
<dbReference type="HAMAP" id="MF_00036_B">
    <property type="entry name" value="Ala_tRNA_synth_B"/>
    <property type="match status" value="1"/>
</dbReference>
<dbReference type="InterPro" id="IPR045864">
    <property type="entry name" value="aa-tRNA-synth_II/BPL/LPL"/>
</dbReference>
<dbReference type="InterPro" id="IPR002318">
    <property type="entry name" value="Ala-tRNA-lgiase_IIc"/>
</dbReference>
<dbReference type="InterPro" id="IPR018162">
    <property type="entry name" value="Ala-tRNA-ligase_IIc_anticod-bd"/>
</dbReference>
<dbReference type="InterPro" id="IPR018165">
    <property type="entry name" value="Ala-tRNA-synth_IIc_core"/>
</dbReference>
<dbReference type="InterPro" id="IPR018164">
    <property type="entry name" value="Ala-tRNA-synth_IIc_N"/>
</dbReference>
<dbReference type="InterPro" id="IPR050058">
    <property type="entry name" value="Ala-tRNA_ligase"/>
</dbReference>
<dbReference type="InterPro" id="IPR023033">
    <property type="entry name" value="Ala_tRNA_ligase_euk/bac"/>
</dbReference>
<dbReference type="InterPro" id="IPR003156">
    <property type="entry name" value="DHHA1_dom"/>
</dbReference>
<dbReference type="InterPro" id="IPR018163">
    <property type="entry name" value="Thr/Ala-tRNA-synth_IIc_edit"/>
</dbReference>
<dbReference type="InterPro" id="IPR009000">
    <property type="entry name" value="Transl_B-barrel_sf"/>
</dbReference>
<dbReference type="InterPro" id="IPR012947">
    <property type="entry name" value="tRNA_SAD"/>
</dbReference>
<dbReference type="NCBIfam" id="TIGR00344">
    <property type="entry name" value="alaS"/>
    <property type="match status" value="1"/>
</dbReference>
<dbReference type="PANTHER" id="PTHR11777:SF9">
    <property type="entry name" value="ALANINE--TRNA LIGASE, CYTOPLASMIC"/>
    <property type="match status" value="1"/>
</dbReference>
<dbReference type="PANTHER" id="PTHR11777">
    <property type="entry name" value="ALANYL-TRNA SYNTHETASE"/>
    <property type="match status" value="1"/>
</dbReference>
<dbReference type="Pfam" id="PF02272">
    <property type="entry name" value="DHHA1"/>
    <property type="match status" value="1"/>
</dbReference>
<dbReference type="Pfam" id="PF01411">
    <property type="entry name" value="tRNA-synt_2c"/>
    <property type="match status" value="1"/>
</dbReference>
<dbReference type="Pfam" id="PF07973">
    <property type="entry name" value="tRNA_SAD"/>
    <property type="match status" value="1"/>
</dbReference>
<dbReference type="PRINTS" id="PR00980">
    <property type="entry name" value="TRNASYNTHALA"/>
</dbReference>
<dbReference type="SMART" id="SM00863">
    <property type="entry name" value="tRNA_SAD"/>
    <property type="match status" value="1"/>
</dbReference>
<dbReference type="SUPFAM" id="SSF55681">
    <property type="entry name" value="Class II aaRS and biotin synthetases"/>
    <property type="match status" value="1"/>
</dbReference>
<dbReference type="SUPFAM" id="SSF101353">
    <property type="entry name" value="Putative anticodon-binding domain of alanyl-tRNA synthetase (AlaRS)"/>
    <property type="match status" value="1"/>
</dbReference>
<dbReference type="SUPFAM" id="SSF55186">
    <property type="entry name" value="ThrRS/AlaRS common domain"/>
    <property type="match status" value="1"/>
</dbReference>
<dbReference type="SUPFAM" id="SSF50447">
    <property type="entry name" value="Translation proteins"/>
    <property type="match status" value="1"/>
</dbReference>
<dbReference type="PROSITE" id="PS50860">
    <property type="entry name" value="AA_TRNA_LIGASE_II_ALA"/>
    <property type="match status" value="1"/>
</dbReference>
<gene>
    <name evidence="1" type="primary">alaS</name>
    <name type="ordered locus">Plut_1952</name>
</gene>
<evidence type="ECO:0000255" key="1">
    <source>
        <dbReference type="HAMAP-Rule" id="MF_00036"/>
    </source>
</evidence>
<evidence type="ECO:0000256" key="2">
    <source>
        <dbReference type="SAM" id="MobiDB-lite"/>
    </source>
</evidence>
<organism>
    <name type="scientific">Chlorobium luteolum (strain DSM 273 / BCRC 81028 / 2530)</name>
    <name type="common">Pelodictyon luteolum</name>
    <dbReference type="NCBI Taxonomy" id="319225"/>
    <lineage>
        <taxon>Bacteria</taxon>
        <taxon>Pseudomonadati</taxon>
        <taxon>Chlorobiota</taxon>
        <taxon>Chlorobiia</taxon>
        <taxon>Chlorobiales</taxon>
        <taxon>Chlorobiaceae</taxon>
        <taxon>Chlorobium/Pelodictyon group</taxon>
        <taxon>Pelodictyon</taxon>
    </lineage>
</organism>